<proteinExistence type="inferred from homology"/>
<accession>B7J3Y7</accession>
<feature type="chain" id="PRO_0000380885" description="8-amino-7-oxononanoate synthase">
    <location>
        <begin position="1"/>
        <end position="389"/>
    </location>
</feature>
<feature type="binding site" evidence="1">
    <location>
        <position position="23"/>
    </location>
    <ligand>
        <name>substrate</name>
    </ligand>
</feature>
<feature type="binding site" evidence="1">
    <location>
        <begin position="114"/>
        <end position="115"/>
    </location>
    <ligand>
        <name>pyridoxal 5'-phosphate</name>
        <dbReference type="ChEBI" id="CHEBI:597326"/>
    </ligand>
</feature>
<feature type="binding site" evidence="1">
    <location>
        <position position="139"/>
    </location>
    <ligand>
        <name>substrate</name>
    </ligand>
</feature>
<feature type="binding site" evidence="1">
    <location>
        <position position="185"/>
    </location>
    <ligand>
        <name>pyridoxal 5'-phosphate</name>
        <dbReference type="ChEBI" id="CHEBI:597326"/>
    </ligand>
</feature>
<feature type="binding site" evidence="1">
    <location>
        <position position="213"/>
    </location>
    <ligand>
        <name>pyridoxal 5'-phosphate</name>
        <dbReference type="ChEBI" id="CHEBI:597326"/>
    </ligand>
</feature>
<feature type="binding site" evidence="1">
    <location>
        <position position="242"/>
    </location>
    <ligand>
        <name>pyridoxal 5'-phosphate</name>
        <dbReference type="ChEBI" id="CHEBI:597326"/>
    </ligand>
</feature>
<feature type="binding site" evidence="1">
    <location>
        <position position="357"/>
    </location>
    <ligand>
        <name>substrate</name>
    </ligand>
</feature>
<feature type="modified residue" description="N6-(pyridoxal phosphate)lysine" evidence="1">
    <location>
        <position position="245"/>
    </location>
</feature>
<name>BIOF_ACIF2</name>
<evidence type="ECO:0000255" key="1">
    <source>
        <dbReference type="HAMAP-Rule" id="MF_01693"/>
    </source>
</evidence>
<keyword id="KW-0093">Biotin biosynthesis</keyword>
<keyword id="KW-0663">Pyridoxal phosphate</keyword>
<keyword id="KW-1185">Reference proteome</keyword>
<keyword id="KW-0808">Transferase</keyword>
<organism>
    <name type="scientific">Acidithiobacillus ferrooxidans (strain ATCC 23270 / DSM 14882 / CIP 104768 / NCIMB 8455)</name>
    <name type="common">Ferrobacillus ferrooxidans (strain ATCC 23270)</name>
    <dbReference type="NCBI Taxonomy" id="243159"/>
    <lineage>
        <taxon>Bacteria</taxon>
        <taxon>Pseudomonadati</taxon>
        <taxon>Pseudomonadota</taxon>
        <taxon>Acidithiobacillia</taxon>
        <taxon>Acidithiobacillales</taxon>
        <taxon>Acidithiobacillaceae</taxon>
        <taxon>Acidithiobacillus</taxon>
    </lineage>
</organism>
<protein>
    <recommendedName>
        <fullName evidence="1">8-amino-7-oxononanoate synthase</fullName>
        <shortName evidence="1">AONS</shortName>
        <ecNumber evidence="1">2.3.1.47</ecNumber>
    </recommendedName>
    <alternativeName>
        <fullName evidence="1">7-keto-8-amino-pelargonic acid synthase</fullName>
        <shortName evidence="1">7-KAP synthase</shortName>
        <shortName evidence="1">KAPA synthase</shortName>
    </alternativeName>
    <alternativeName>
        <fullName evidence="1">8-amino-7-ketopelargonate synthase</fullName>
    </alternativeName>
</protein>
<gene>
    <name evidence="1" type="primary">bioF</name>
    <name type="ordered locus">AFE_0243</name>
</gene>
<comment type="function">
    <text evidence="1">Catalyzes the decarboxylative condensation of pimeloyl-[acyl-carrier protein] and L-alanine to produce 8-amino-7-oxononanoate (AON), [acyl-carrier protein], and carbon dioxide.</text>
</comment>
<comment type="catalytic activity">
    <reaction evidence="1">
        <text>6-carboxyhexanoyl-[ACP] + L-alanine + H(+) = (8S)-8-amino-7-oxononanoate + holo-[ACP] + CO2</text>
        <dbReference type="Rhea" id="RHEA:42288"/>
        <dbReference type="Rhea" id="RHEA-COMP:9685"/>
        <dbReference type="Rhea" id="RHEA-COMP:9955"/>
        <dbReference type="ChEBI" id="CHEBI:15378"/>
        <dbReference type="ChEBI" id="CHEBI:16526"/>
        <dbReference type="ChEBI" id="CHEBI:57972"/>
        <dbReference type="ChEBI" id="CHEBI:64479"/>
        <dbReference type="ChEBI" id="CHEBI:78846"/>
        <dbReference type="ChEBI" id="CHEBI:149468"/>
        <dbReference type="EC" id="2.3.1.47"/>
    </reaction>
</comment>
<comment type="cofactor">
    <cofactor evidence="1">
        <name>pyridoxal 5'-phosphate</name>
        <dbReference type="ChEBI" id="CHEBI:597326"/>
    </cofactor>
</comment>
<comment type="pathway">
    <text evidence="1">Cofactor biosynthesis; biotin biosynthesis.</text>
</comment>
<comment type="subunit">
    <text evidence="1">Homodimer.</text>
</comment>
<comment type="similarity">
    <text evidence="1">Belongs to the class-II pyridoxal-phosphate-dependent aminotransferase family. BioF subfamily.</text>
</comment>
<reference key="1">
    <citation type="journal article" date="2008" name="BMC Genomics">
        <title>Acidithiobacillus ferrooxidans metabolism: from genome sequence to industrial applications.</title>
        <authorList>
            <person name="Valdes J."/>
            <person name="Pedroso I."/>
            <person name="Quatrini R."/>
            <person name="Dodson R.J."/>
            <person name="Tettelin H."/>
            <person name="Blake R. II"/>
            <person name="Eisen J.A."/>
            <person name="Holmes D.S."/>
        </authorList>
    </citation>
    <scope>NUCLEOTIDE SEQUENCE [LARGE SCALE GENOMIC DNA]</scope>
    <source>
        <strain>ATCC 23270 / DSM 14882 / CIP 104768 / NCIMB 8455</strain>
    </source>
</reference>
<dbReference type="EC" id="2.3.1.47" evidence="1"/>
<dbReference type="EMBL" id="CP001219">
    <property type="protein sequence ID" value="ACK78375.1"/>
    <property type="molecule type" value="Genomic_DNA"/>
</dbReference>
<dbReference type="RefSeq" id="WP_012536041.1">
    <property type="nucleotide sequence ID" value="NC_011761.1"/>
</dbReference>
<dbReference type="SMR" id="B7J3Y7"/>
<dbReference type="STRING" id="243159.AFE_0243"/>
<dbReference type="PaxDb" id="243159-AFE_0243"/>
<dbReference type="GeneID" id="65279624"/>
<dbReference type="KEGG" id="afr:AFE_0243"/>
<dbReference type="eggNOG" id="COG0156">
    <property type="taxonomic scope" value="Bacteria"/>
</dbReference>
<dbReference type="HOGENOM" id="CLU_015846_11_2_6"/>
<dbReference type="UniPathway" id="UPA00078"/>
<dbReference type="Proteomes" id="UP000001362">
    <property type="component" value="Chromosome"/>
</dbReference>
<dbReference type="GO" id="GO:0008710">
    <property type="term" value="F:8-amino-7-oxononanoate synthase activity"/>
    <property type="evidence" value="ECO:0007669"/>
    <property type="project" value="UniProtKB-UniRule"/>
</dbReference>
<dbReference type="GO" id="GO:0030170">
    <property type="term" value="F:pyridoxal phosphate binding"/>
    <property type="evidence" value="ECO:0007669"/>
    <property type="project" value="UniProtKB-UniRule"/>
</dbReference>
<dbReference type="GO" id="GO:0009102">
    <property type="term" value="P:biotin biosynthetic process"/>
    <property type="evidence" value="ECO:0007669"/>
    <property type="project" value="UniProtKB-UniRule"/>
</dbReference>
<dbReference type="Gene3D" id="3.90.1150.10">
    <property type="entry name" value="Aspartate Aminotransferase, domain 1"/>
    <property type="match status" value="1"/>
</dbReference>
<dbReference type="Gene3D" id="3.40.640.10">
    <property type="entry name" value="Type I PLP-dependent aspartate aminotransferase-like (Major domain)"/>
    <property type="match status" value="1"/>
</dbReference>
<dbReference type="HAMAP" id="MF_01693">
    <property type="entry name" value="BioF_aminotrans_2"/>
    <property type="match status" value="1"/>
</dbReference>
<dbReference type="InterPro" id="IPR001917">
    <property type="entry name" value="Aminotrans_II_pyridoxalP_BS"/>
</dbReference>
<dbReference type="InterPro" id="IPR004839">
    <property type="entry name" value="Aminotransferase_I/II_large"/>
</dbReference>
<dbReference type="InterPro" id="IPR050087">
    <property type="entry name" value="AON_synthase_class-II"/>
</dbReference>
<dbReference type="InterPro" id="IPR004723">
    <property type="entry name" value="AONS_Archaea/Proteobacteria"/>
</dbReference>
<dbReference type="InterPro" id="IPR022834">
    <property type="entry name" value="AONS_Proteobacteria"/>
</dbReference>
<dbReference type="InterPro" id="IPR015424">
    <property type="entry name" value="PyrdxlP-dep_Trfase"/>
</dbReference>
<dbReference type="InterPro" id="IPR015421">
    <property type="entry name" value="PyrdxlP-dep_Trfase_major"/>
</dbReference>
<dbReference type="InterPro" id="IPR015422">
    <property type="entry name" value="PyrdxlP-dep_Trfase_small"/>
</dbReference>
<dbReference type="NCBIfam" id="TIGR00858">
    <property type="entry name" value="bioF"/>
    <property type="match status" value="1"/>
</dbReference>
<dbReference type="PANTHER" id="PTHR13693:SF100">
    <property type="entry name" value="8-AMINO-7-OXONONANOATE SYNTHASE"/>
    <property type="match status" value="1"/>
</dbReference>
<dbReference type="PANTHER" id="PTHR13693">
    <property type="entry name" value="CLASS II AMINOTRANSFERASE/8-AMINO-7-OXONONANOATE SYNTHASE"/>
    <property type="match status" value="1"/>
</dbReference>
<dbReference type="Pfam" id="PF00155">
    <property type="entry name" value="Aminotran_1_2"/>
    <property type="match status" value="1"/>
</dbReference>
<dbReference type="SUPFAM" id="SSF53383">
    <property type="entry name" value="PLP-dependent transferases"/>
    <property type="match status" value="1"/>
</dbReference>
<dbReference type="PROSITE" id="PS00599">
    <property type="entry name" value="AA_TRANSFER_CLASS_2"/>
    <property type="match status" value="1"/>
</dbReference>
<sequence>MHSEREESWRAELSALRAHDLWRELQVLQPAPERGPPTFVGTRGEPLLSFASNDYLGLSAESALRDAAIAEIQQSGVGAGAAPLLGGERPAHAVLANALARWLGVEAALLFGSGYLANLGVISTLVGRGDRVYADRLNHASLVDGVRLSGARLHRYRHGDMTHLAQWLERGGRGQAWIITDGVFSMDGDIAPLPELATLAQQYGAGIILDEAHAFGVLGTEGQGTAAHWNMDIHGVDVIMGTLGKAFGVYGAFVAGSQDVVDLLRNRARSFIYHTALPSALAAAALVALDLLRHGDARRERLTQHRQHLRAQVPDAPWLASETPIQGLLLGDARRALTVSAQLRRAGLYCPAVRPPTVPADSARLRITLSAAHSHDDIELLATTLREVL</sequence>